<name>YBAB_ECOSE</name>
<feature type="chain" id="PRO_1000114612" description="Nucleoid-associated protein YbaB">
    <location>
        <begin position="1"/>
        <end position="109"/>
    </location>
</feature>
<comment type="function">
    <text evidence="1">Binds to DNA and alters its conformation. May be involved in regulation of gene expression, nucleoid organization and DNA protection.</text>
</comment>
<comment type="subunit">
    <text evidence="1">Homodimer.</text>
</comment>
<comment type="subcellular location">
    <subcellularLocation>
        <location evidence="1">Cytoplasm</location>
        <location evidence="1">Nucleoid</location>
    </subcellularLocation>
</comment>
<comment type="similarity">
    <text evidence="1">Belongs to the YbaB/EbfC family.</text>
</comment>
<dbReference type="EMBL" id="AP009240">
    <property type="protein sequence ID" value="BAG76020.1"/>
    <property type="molecule type" value="Genomic_DNA"/>
</dbReference>
<dbReference type="RefSeq" id="WP_000467098.1">
    <property type="nucleotide sequence ID" value="NC_011415.1"/>
</dbReference>
<dbReference type="SMR" id="B6I0C3"/>
<dbReference type="KEGG" id="ecy:ECSE_0496"/>
<dbReference type="HOGENOM" id="CLU_140930_0_0_6"/>
<dbReference type="Proteomes" id="UP000008199">
    <property type="component" value="Chromosome"/>
</dbReference>
<dbReference type="GO" id="GO:0043590">
    <property type="term" value="C:bacterial nucleoid"/>
    <property type="evidence" value="ECO:0007669"/>
    <property type="project" value="UniProtKB-UniRule"/>
</dbReference>
<dbReference type="GO" id="GO:0005829">
    <property type="term" value="C:cytosol"/>
    <property type="evidence" value="ECO:0007669"/>
    <property type="project" value="TreeGrafter"/>
</dbReference>
<dbReference type="GO" id="GO:0003677">
    <property type="term" value="F:DNA binding"/>
    <property type="evidence" value="ECO:0007669"/>
    <property type="project" value="UniProtKB-UniRule"/>
</dbReference>
<dbReference type="FunFam" id="3.30.1310.10:FF:000001">
    <property type="entry name" value="Nucleoid-associated protein YbaB"/>
    <property type="match status" value="1"/>
</dbReference>
<dbReference type="Gene3D" id="3.30.1310.10">
    <property type="entry name" value="Nucleoid-associated protein YbaB-like domain"/>
    <property type="match status" value="1"/>
</dbReference>
<dbReference type="HAMAP" id="MF_00274">
    <property type="entry name" value="DNA_YbaB_EbfC"/>
    <property type="match status" value="1"/>
</dbReference>
<dbReference type="InterPro" id="IPR036894">
    <property type="entry name" value="YbaB-like_sf"/>
</dbReference>
<dbReference type="InterPro" id="IPR004401">
    <property type="entry name" value="YbaB/EbfC"/>
</dbReference>
<dbReference type="NCBIfam" id="TIGR00103">
    <property type="entry name" value="DNA_YbaB_EbfC"/>
    <property type="match status" value="1"/>
</dbReference>
<dbReference type="PANTHER" id="PTHR33449">
    <property type="entry name" value="NUCLEOID-ASSOCIATED PROTEIN YBAB"/>
    <property type="match status" value="1"/>
</dbReference>
<dbReference type="PANTHER" id="PTHR33449:SF1">
    <property type="entry name" value="NUCLEOID-ASSOCIATED PROTEIN YBAB"/>
    <property type="match status" value="1"/>
</dbReference>
<dbReference type="Pfam" id="PF02575">
    <property type="entry name" value="YbaB_DNA_bd"/>
    <property type="match status" value="1"/>
</dbReference>
<dbReference type="PIRSF" id="PIRSF004555">
    <property type="entry name" value="UCP004555"/>
    <property type="match status" value="1"/>
</dbReference>
<dbReference type="SUPFAM" id="SSF82607">
    <property type="entry name" value="YbaB-like"/>
    <property type="match status" value="1"/>
</dbReference>
<reference key="1">
    <citation type="journal article" date="2008" name="DNA Res.">
        <title>Complete genome sequence and comparative analysis of the wild-type commensal Escherichia coli strain SE11 isolated from a healthy adult.</title>
        <authorList>
            <person name="Oshima K."/>
            <person name="Toh H."/>
            <person name="Ogura Y."/>
            <person name="Sasamoto H."/>
            <person name="Morita H."/>
            <person name="Park S.-H."/>
            <person name="Ooka T."/>
            <person name="Iyoda S."/>
            <person name="Taylor T.D."/>
            <person name="Hayashi T."/>
            <person name="Itoh K."/>
            <person name="Hattori M."/>
        </authorList>
    </citation>
    <scope>NUCLEOTIDE SEQUENCE [LARGE SCALE GENOMIC DNA]</scope>
    <source>
        <strain>SE11</strain>
    </source>
</reference>
<evidence type="ECO:0000255" key="1">
    <source>
        <dbReference type="HAMAP-Rule" id="MF_00274"/>
    </source>
</evidence>
<gene>
    <name evidence="1" type="primary">ybaB</name>
    <name type="ordered locus">ECSE_0496</name>
</gene>
<accession>B6I0C3</accession>
<protein>
    <recommendedName>
        <fullName evidence="1">Nucleoid-associated protein YbaB</fullName>
    </recommendedName>
</protein>
<keyword id="KW-0963">Cytoplasm</keyword>
<keyword id="KW-0238">DNA-binding</keyword>
<organism>
    <name type="scientific">Escherichia coli (strain SE11)</name>
    <dbReference type="NCBI Taxonomy" id="409438"/>
    <lineage>
        <taxon>Bacteria</taxon>
        <taxon>Pseudomonadati</taxon>
        <taxon>Pseudomonadota</taxon>
        <taxon>Gammaproteobacteria</taxon>
        <taxon>Enterobacterales</taxon>
        <taxon>Enterobacteriaceae</taxon>
        <taxon>Escherichia</taxon>
    </lineage>
</organism>
<sequence length="109" mass="12015">MFGKGGLGNLMKQAQQMQEKMQKMQEEIAQLEVTGESGAGLVKVTINGAHNCRRVEIDPSLLEDDKEMLEDLVAAAFNDAARRIEETQKEKMASVSSGMQLPPGFKMPF</sequence>
<proteinExistence type="inferred from homology"/>